<protein>
    <recommendedName>
        <fullName evidence="5">Mastoparan-J</fullName>
    </recommendedName>
    <alternativeName>
        <fullName evidence="4 5">Polistes mastoparan</fullName>
        <shortName evidence="4">P-MP</shortName>
    </alternativeName>
</protein>
<evidence type="ECO:0000250" key="1">
    <source>
        <dbReference type="UniProtKB" id="P01514"/>
    </source>
</evidence>
<evidence type="ECO:0000250" key="2">
    <source>
        <dbReference type="UniProtKB" id="P84914"/>
    </source>
</evidence>
<evidence type="ECO:0000269" key="3">
    <source ref="1"/>
</evidence>
<evidence type="ECO:0000303" key="4">
    <source>
    </source>
</evidence>
<evidence type="ECO:0000303" key="5">
    <source ref="1"/>
</evidence>
<evidence type="ECO:0000305" key="6"/>
<evidence type="ECO:0000305" key="7">
    <source ref="1"/>
</evidence>
<keyword id="KW-0027">Amidation</keyword>
<keyword id="KW-0903">Direct protein sequencing</keyword>
<keyword id="KW-1213">G-protein coupled receptor impairing toxin</keyword>
<keyword id="KW-0467">Mast cell degranulation</keyword>
<keyword id="KW-0964">Secreted</keyword>
<keyword id="KW-0800">Toxin</keyword>
<feature type="peptide" id="PRO_0000044054" description="Mastoparan-J" evidence="3">
    <location>
        <begin position="1"/>
        <end position="14"/>
    </location>
</feature>
<feature type="modified residue" description="Leucine amide" evidence="3">
    <location>
        <position position="14"/>
    </location>
</feature>
<dbReference type="PIR" id="A01780">
    <property type="entry name" value="QMWAPP"/>
</dbReference>
<dbReference type="TCDB" id="1.C.32.2.1">
    <property type="family name" value="the amphipathic peptide mastoparan (mastoparan) family"/>
</dbReference>
<dbReference type="GO" id="GO:0005576">
    <property type="term" value="C:extracellular region"/>
    <property type="evidence" value="ECO:0007669"/>
    <property type="project" value="UniProtKB-SubCell"/>
</dbReference>
<dbReference type="GO" id="GO:0090729">
    <property type="term" value="F:toxin activity"/>
    <property type="evidence" value="ECO:0007669"/>
    <property type="project" value="UniProtKB-KW"/>
</dbReference>
<accession>P01517</accession>
<comment type="function">
    <text evidence="1 2 3">Mast cell degranulating peptide (Ref.1). Its mast cell degranulation activity may be related to the activation of G-protein coupled receptors in mast cells as well as interaction with other proteins located in cell endosomal membranes in the mast cells (By similarity).</text>
</comment>
<comment type="subcellular location">
    <subcellularLocation>
        <location evidence="3">Secreted</location>
    </subcellularLocation>
</comment>
<comment type="tissue specificity">
    <text evidence="7">Expressed by the venom gland.</text>
</comment>
<comment type="similarity">
    <text evidence="6">Belongs to the MCD family. Mastoparan subfamily.</text>
</comment>
<organism>
    <name type="scientific">Polistes jokahamae</name>
    <name type="common">Dark-waist paper wasp</name>
    <name type="synonym">Polistes jadwigae</name>
    <dbReference type="NCBI Taxonomy" id="256662"/>
    <lineage>
        <taxon>Eukaryota</taxon>
        <taxon>Metazoa</taxon>
        <taxon>Ecdysozoa</taxon>
        <taxon>Arthropoda</taxon>
        <taxon>Hexapoda</taxon>
        <taxon>Insecta</taxon>
        <taxon>Pterygota</taxon>
        <taxon>Neoptera</taxon>
        <taxon>Endopterygota</taxon>
        <taxon>Hymenoptera</taxon>
        <taxon>Apocrita</taxon>
        <taxon>Aculeata</taxon>
        <taxon>Vespoidea</taxon>
        <taxon>Vespidae</taxon>
        <taxon>Polistinae</taxon>
        <taxon>Polistini</taxon>
        <taxon>Polistes</taxon>
    </lineage>
</organism>
<name>MAST_POLJO</name>
<proteinExistence type="evidence at protein level"/>
<sequence length="14" mass="1636">VDWKKIGQHILSVL</sequence>
<reference key="1">
    <citation type="journal article" date="1980" name="Biomed. Res.">
        <title>A new mast cell degranulating peptide, polistes mastoparan, in the venom of Polistes jadwigae.</title>
        <authorList>
            <person name="Hirai Y."/>
            <person name="Ueno Y."/>
            <person name="Yasuhara T."/>
            <person name="Yoshida H."/>
            <person name="Nakajima T."/>
        </authorList>
    </citation>
    <scope>PROTEIN SEQUENCE</scope>
    <scope>FUNCTION</scope>
    <scope>AMIDATION AT LEU-14</scope>
    <scope>SUBCELLULAR LOCATION</scope>
    <source>
        <tissue>Venom</tissue>
    </source>
</reference>
<reference key="2">
    <citation type="journal article" date="1992" name="FEBS Lett.">
        <title>Membrane interactions of mastoparan analogues related to their differential effects on protein kinase C, Na, K-ATPase and HL60 cells.</title>
        <authorList>
            <person name="Raynor R.L."/>
            <person name="Kim Y.S."/>
            <person name="Zheng B."/>
            <person name="Vogler W.R."/>
            <person name="Kuo J.F."/>
        </authorList>
    </citation>
    <scope>FUNCTION</scope>
</reference>